<reference key="1">
    <citation type="journal article" date="1999" name="Science">
        <title>Truncated RanGAP encoded by the Segregation Distorter locus of Drosophila.</title>
        <authorList>
            <person name="Merrill C."/>
            <person name="Bayraktaroglu L."/>
            <person name="Kusano A."/>
            <person name="Ganetzky B."/>
        </authorList>
    </citation>
    <scope>NUCLEOTIDE SEQUENCE [MRNA]</scope>
    <scope>FUNCTION</scope>
    <scope>TISSUE SPECIFICITY</scope>
    <source>
        <strain>Canton-S</strain>
        <tissue>Testis</tissue>
    </source>
</reference>
<reference key="2">
    <citation type="journal article" date="2000" name="Science">
        <title>The genome sequence of Drosophila melanogaster.</title>
        <authorList>
            <person name="Adams M.D."/>
            <person name="Celniker S.E."/>
            <person name="Holt R.A."/>
            <person name="Evans C.A."/>
            <person name="Gocayne J.D."/>
            <person name="Amanatides P.G."/>
            <person name="Scherer S.E."/>
            <person name="Li P.W."/>
            <person name="Hoskins R.A."/>
            <person name="Galle R.F."/>
            <person name="George R.A."/>
            <person name="Lewis S.E."/>
            <person name="Richards S."/>
            <person name="Ashburner M."/>
            <person name="Henderson S.N."/>
            <person name="Sutton G.G."/>
            <person name="Wortman J.R."/>
            <person name="Yandell M.D."/>
            <person name="Zhang Q."/>
            <person name="Chen L.X."/>
            <person name="Brandon R.C."/>
            <person name="Rogers Y.-H.C."/>
            <person name="Blazej R.G."/>
            <person name="Champe M."/>
            <person name="Pfeiffer B.D."/>
            <person name="Wan K.H."/>
            <person name="Doyle C."/>
            <person name="Baxter E.G."/>
            <person name="Helt G."/>
            <person name="Nelson C.R."/>
            <person name="Miklos G.L.G."/>
            <person name="Abril J.F."/>
            <person name="Agbayani A."/>
            <person name="An H.-J."/>
            <person name="Andrews-Pfannkoch C."/>
            <person name="Baldwin D."/>
            <person name="Ballew R.M."/>
            <person name="Basu A."/>
            <person name="Baxendale J."/>
            <person name="Bayraktaroglu L."/>
            <person name="Beasley E.M."/>
            <person name="Beeson K.Y."/>
            <person name="Benos P.V."/>
            <person name="Berman B.P."/>
            <person name="Bhandari D."/>
            <person name="Bolshakov S."/>
            <person name="Borkova D."/>
            <person name="Botchan M.R."/>
            <person name="Bouck J."/>
            <person name="Brokstein P."/>
            <person name="Brottier P."/>
            <person name="Burtis K.C."/>
            <person name="Busam D.A."/>
            <person name="Butler H."/>
            <person name="Cadieu E."/>
            <person name="Center A."/>
            <person name="Chandra I."/>
            <person name="Cherry J.M."/>
            <person name="Cawley S."/>
            <person name="Dahlke C."/>
            <person name="Davenport L.B."/>
            <person name="Davies P."/>
            <person name="de Pablos B."/>
            <person name="Delcher A."/>
            <person name="Deng Z."/>
            <person name="Mays A.D."/>
            <person name="Dew I."/>
            <person name="Dietz S.M."/>
            <person name="Dodson K."/>
            <person name="Doup L.E."/>
            <person name="Downes M."/>
            <person name="Dugan-Rocha S."/>
            <person name="Dunkov B.C."/>
            <person name="Dunn P."/>
            <person name="Durbin K.J."/>
            <person name="Evangelista C.C."/>
            <person name="Ferraz C."/>
            <person name="Ferriera S."/>
            <person name="Fleischmann W."/>
            <person name="Fosler C."/>
            <person name="Gabrielian A.E."/>
            <person name="Garg N.S."/>
            <person name="Gelbart W.M."/>
            <person name="Glasser K."/>
            <person name="Glodek A."/>
            <person name="Gong F."/>
            <person name="Gorrell J.H."/>
            <person name="Gu Z."/>
            <person name="Guan P."/>
            <person name="Harris M."/>
            <person name="Harris N.L."/>
            <person name="Harvey D.A."/>
            <person name="Heiman T.J."/>
            <person name="Hernandez J.R."/>
            <person name="Houck J."/>
            <person name="Hostin D."/>
            <person name="Houston K.A."/>
            <person name="Howland T.J."/>
            <person name="Wei M.-H."/>
            <person name="Ibegwam C."/>
            <person name="Jalali M."/>
            <person name="Kalush F."/>
            <person name="Karpen G.H."/>
            <person name="Ke Z."/>
            <person name="Kennison J.A."/>
            <person name="Ketchum K.A."/>
            <person name="Kimmel B.E."/>
            <person name="Kodira C.D."/>
            <person name="Kraft C.L."/>
            <person name="Kravitz S."/>
            <person name="Kulp D."/>
            <person name="Lai Z."/>
            <person name="Lasko P."/>
            <person name="Lei Y."/>
            <person name="Levitsky A.A."/>
            <person name="Li J.H."/>
            <person name="Li Z."/>
            <person name="Liang Y."/>
            <person name="Lin X."/>
            <person name="Liu X."/>
            <person name="Mattei B."/>
            <person name="McIntosh T.C."/>
            <person name="McLeod M.P."/>
            <person name="McPherson D."/>
            <person name="Merkulov G."/>
            <person name="Milshina N.V."/>
            <person name="Mobarry C."/>
            <person name="Morris J."/>
            <person name="Moshrefi A."/>
            <person name="Mount S.M."/>
            <person name="Moy M."/>
            <person name="Murphy B."/>
            <person name="Murphy L."/>
            <person name="Muzny D.M."/>
            <person name="Nelson D.L."/>
            <person name="Nelson D.R."/>
            <person name="Nelson K.A."/>
            <person name="Nixon K."/>
            <person name="Nusskern D.R."/>
            <person name="Pacleb J.M."/>
            <person name="Palazzolo M."/>
            <person name="Pittman G.S."/>
            <person name="Pan S."/>
            <person name="Pollard J."/>
            <person name="Puri V."/>
            <person name="Reese M.G."/>
            <person name="Reinert K."/>
            <person name="Remington K."/>
            <person name="Saunders R.D.C."/>
            <person name="Scheeler F."/>
            <person name="Shen H."/>
            <person name="Shue B.C."/>
            <person name="Siden-Kiamos I."/>
            <person name="Simpson M."/>
            <person name="Skupski M.P."/>
            <person name="Smith T.J."/>
            <person name="Spier E."/>
            <person name="Spradling A.C."/>
            <person name="Stapleton M."/>
            <person name="Strong R."/>
            <person name="Sun E."/>
            <person name="Svirskas R."/>
            <person name="Tector C."/>
            <person name="Turner R."/>
            <person name="Venter E."/>
            <person name="Wang A.H."/>
            <person name="Wang X."/>
            <person name="Wang Z.-Y."/>
            <person name="Wassarman D.A."/>
            <person name="Weinstock G.M."/>
            <person name="Weissenbach J."/>
            <person name="Williams S.M."/>
            <person name="Woodage T."/>
            <person name="Worley K.C."/>
            <person name="Wu D."/>
            <person name="Yang S."/>
            <person name="Yao Q.A."/>
            <person name="Ye J."/>
            <person name="Yeh R.-F."/>
            <person name="Zaveri J.S."/>
            <person name="Zhan M."/>
            <person name="Zhang G."/>
            <person name="Zhao Q."/>
            <person name="Zheng L."/>
            <person name="Zheng X.H."/>
            <person name="Zhong F.N."/>
            <person name="Zhong W."/>
            <person name="Zhou X."/>
            <person name="Zhu S.C."/>
            <person name="Zhu X."/>
            <person name="Smith H.O."/>
            <person name="Gibbs R.A."/>
            <person name="Myers E.W."/>
            <person name="Rubin G.M."/>
            <person name="Venter J.C."/>
        </authorList>
    </citation>
    <scope>NUCLEOTIDE SEQUENCE [LARGE SCALE GENOMIC DNA]</scope>
    <source>
        <strain>Berkeley</strain>
    </source>
</reference>
<reference key="3">
    <citation type="journal article" date="2002" name="Genome Biol.">
        <title>Annotation of the Drosophila melanogaster euchromatic genome: a systematic review.</title>
        <authorList>
            <person name="Misra S."/>
            <person name="Crosby M.A."/>
            <person name="Mungall C.J."/>
            <person name="Matthews B.B."/>
            <person name="Campbell K.S."/>
            <person name="Hradecky P."/>
            <person name="Huang Y."/>
            <person name="Kaminker J.S."/>
            <person name="Millburn G.H."/>
            <person name="Prochnik S.E."/>
            <person name="Smith C.D."/>
            <person name="Tupy J.L."/>
            <person name="Whitfield E.J."/>
            <person name="Bayraktaroglu L."/>
            <person name="Berman B.P."/>
            <person name="Bettencourt B.R."/>
            <person name="Celniker S.E."/>
            <person name="de Grey A.D.N.J."/>
            <person name="Drysdale R.A."/>
            <person name="Harris N.L."/>
            <person name="Richter J."/>
            <person name="Russo S."/>
            <person name="Schroeder A.J."/>
            <person name="Shu S.Q."/>
            <person name="Stapleton M."/>
            <person name="Yamada C."/>
            <person name="Ashburner M."/>
            <person name="Gelbart W.M."/>
            <person name="Rubin G.M."/>
            <person name="Lewis S.E."/>
        </authorList>
    </citation>
    <scope>GENOME REANNOTATION</scope>
    <source>
        <strain>Berkeley</strain>
    </source>
</reference>
<reference key="4">
    <citation type="journal article" date="2002" name="Genome Biol.">
        <title>A Drosophila full-length cDNA resource.</title>
        <authorList>
            <person name="Stapleton M."/>
            <person name="Carlson J.W."/>
            <person name="Brokstein P."/>
            <person name="Yu C."/>
            <person name="Champe M."/>
            <person name="George R.A."/>
            <person name="Guarin H."/>
            <person name="Kronmiller B."/>
            <person name="Pacleb J.M."/>
            <person name="Park S."/>
            <person name="Wan K.H."/>
            <person name="Rubin G.M."/>
            <person name="Celniker S.E."/>
        </authorList>
    </citation>
    <scope>NUCLEOTIDE SEQUENCE [LARGE SCALE MRNA]</scope>
    <source>
        <strain>Berkeley</strain>
        <tissue>Embryo</tissue>
    </source>
</reference>
<reference key="5">
    <citation type="journal article" date="2008" name="J. Proteome Res.">
        <title>Phosphoproteome analysis of Drosophila melanogaster embryos.</title>
        <authorList>
            <person name="Zhai B."/>
            <person name="Villen J."/>
            <person name="Beausoleil S.A."/>
            <person name="Mintseris J."/>
            <person name="Gygi S.P."/>
        </authorList>
    </citation>
    <scope>PHOSPHORYLATION [LARGE SCALE ANALYSIS] AT THR-433; THR-434 AND SER-436</scope>
    <scope>IDENTIFICATION BY MASS SPECTROMETRY</scope>
    <source>
        <tissue>Embryo</tissue>
    </source>
</reference>
<reference key="6">
    <citation type="journal article" date="2004" name="Mol. Cell. Biol.">
        <title>RanBP2/Nup358 provides a major binding site for NXF1-p15 dimers at the nuclear pore complex and functions in nuclear mRNA export.</title>
        <authorList>
            <person name="Forler D."/>
            <person name="Rabut G."/>
            <person name="Ciccarelli F.D."/>
            <person name="Herold A."/>
            <person name="Koecher T."/>
            <person name="Niggeweg R."/>
            <person name="Bork P."/>
            <person name="Ellenberg J."/>
            <person name="Izaurralde E."/>
        </authorList>
    </citation>
    <scope>IDENTIFICATION IN COMPLEX WITH NUP358; SBR AND NXT1</scope>
    <scope>ASSOCIATION WITH NUCLEAR PORE COMPLEX</scope>
</reference>
<reference key="7">
    <citation type="journal article" date="2006" name="J. Cell Sci.">
        <title>The nucleoporin Nup214 sequesters CRM1 at the nuclear rim and modulates NFkappaB activation in Drosophila.</title>
        <authorList>
            <person name="Xylourgidis N."/>
            <person name="Roth P."/>
            <person name="Sabri N."/>
            <person name="Tsarouhas V."/>
            <person name="Samakovlis C."/>
        </authorList>
    </citation>
    <scope>ASSOCIATION WITH NUCLEAR PORE COMPLEX</scope>
</reference>
<reference key="8">
    <citation type="journal article" date="2019" name="Cell">
        <title>Nuclear Pores Assemble from Nucleoporin Condensates During Oogenesis.</title>
        <authorList>
            <person name="Hampoelz B."/>
            <person name="Schwarz A."/>
            <person name="Ronchi P."/>
            <person name="Bragulat-Teixidor H."/>
            <person name="Tischer C."/>
            <person name="Gaspar I."/>
            <person name="Ephrussi A."/>
            <person name="Schwab Y."/>
            <person name="Beck M."/>
        </authorList>
    </citation>
    <scope>FUNCTION</scope>
    <scope>SUBCELLULAR LOCATION</scope>
    <scope>TISSUE SPECIFICITY</scope>
</reference>
<accession>Q9VIW3</accession>
<accession>Q9XZI5</accession>
<sequence length="596" mass="66070">MSTFNFASMAAQLGQEQGISFENKVLSWNTAADVQDVVDALNKQTTVHYLNLDGNTLGVEAAKAIGEGLKRHPEFRKALWKNMFTGRLISEIPEALKHLGAALIVAGAKLTVLDLSDNALGPNGMRGLEELLRSPVCYSLQELLLCNCGLGPEGGSMLSRALIDLHANANKAGFPLQLRVFIGSRNRLEDAGATEMATAFQTLKTFEEIVLEQNSIYIEGVEALAESFKHNPHLRVLNMNDNTLKSEGAEKIAEALPFLPLLREMSFGDCLIKTNGAYHFGEALERGNERLEVIDLGFNEINSDGGLVLVNAMGNKPKLRILNLDGNSFGEEGSEKIISEMSKLPTAAALQPFQHQEEEDLEDEYQADKQDADYEEEEEVHEHANDTTEEADEDSEGDEDDEEDEGDEEYSNVAEETAYVTTNAYTTKLFNDTTNSMASETFAVANKTISQKCTPEKFCLSQKPCSQEDFDSLDMDNKLEALQSIVNQFTGDNHLLLLVFTTLKCAHLSQSSKAALDLAVSLYQATFDYAIKTKQETRVLNYVLMQLRLLPCKEVFHSDYDVKNCRFALREALKQPTFANDNIKNSFKTFLEGAES</sequence>
<dbReference type="EMBL" id="AF143860">
    <property type="protein sequence ID" value="AAD31518.1"/>
    <property type="molecule type" value="mRNA"/>
</dbReference>
<dbReference type="EMBL" id="AE014134">
    <property type="protein sequence ID" value="AAF53801.1"/>
    <property type="molecule type" value="Genomic_DNA"/>
</dbReference>
<dbReference type="EMBL" id="AY061219">
    <property type="protein sequence ID" value="AAL28767.1"/>
    <property type="molecule type" value="mRNA"/>
</dbReference>
<dbReference type="RefSeq" id="NP_001260578.1">
    <property type="nucleotide sequence ID" value="NM_001273649.1"/>
</dbReference>
<dbReference type="RefSeq" id="NP_476712.1">
    <property type="nucleotide sequence ID" value="NM_057364.4"/>
</dbReference>
<dbReference type="SMR" id="Q9VIW3"/>
<dbReference type="BioGRID" id="61202">
    <property type="interactions" value="38"/>
</dbReference>
<dbReference type="DIP" id="DIP-23850N"/>
<dbReference type="FunCoup" id="Q9VIW3">
    <property type="interactions" value="1740"/>
</dbReference>
<dbReference type="IntAct" id="Q9VIW3">
    <property type="interactions" value="68"/>
</dbReference>
<dbReference type="MINT" id="Q9VIW3"/>
<dbReference type="STRING" id="7227.FBpp0080775"/>
<dbReference type="iPTMnet" id="Q9VIW3"/>
<dbReference type="PaxDb" id="7227-FBpp0080775"/>
<dbReference type="DNASU" id="35223"/>
<dbReference type="EnsemblMetazoa" id="FBtr0081234">
    <property type="protein sequence ID" value="FBpp0080775"/>
    <property type="gene ID" value="FBgn0003346"/>
</dbReference>
<dbReference type="EnsemblMetazoa" id="FBtr0334174">
    <property type="protein sequence ID" value="FBpp0306291"/>
    <property type="gene ID" value="FBgn0003346"/>
</dbReference>
<dbReference type="GeneID" id="35223"/>
<dbReference type="KEGG" id="dme:Dmel_CG9999"/>
<dbReference type="AGR" id="FB:FBgn0003346"/>
<dbReference type="CTD" id="35223"/>
<dbReference type="FlyBase" id="FBgn0003346">
    <property type="gene designation" value="RanGAP"/>
</dbReference>
<dbReference type="VEuPathDB" id="VectorBase:FBgn0003346"/>
<dbReference type="eggNOG" id="KOG1909">
    <property type="taxonomic scope" value="Eukaryota"/>
</dbReference>
<dbReference type="GeneTree" id="ENSGT00440000039203"/>
<dbReference type="InParanoid" id="Q9VIW3"/>
<dbReference type="OMA" id="NGSMEAW"/>
<dbReference type="OrthoDB" id="184583at2759"/>
<dbReference type="PhylomeDB" id="Q9VIW3"/>
<dbReference type="Reactome" id="R-DME-4615885">
    <property type="pathway name" value="SUMOylation of DNA replication proteins"/>
</dbReference>
<dbReference type="Reactome" id="R-DME-9615933">
    <property type="pathway name" value="Postmitotic nuclear pore complex (NPC) reformation"/>
</dbReference>
<dbReference type="SignaLink" id="Q9VIW3"/>
<dbReference type="BioGRID-ORCS" id="35223">
    <property type="hits" value="1 hit in 1 CRISPR screen"/>
</dbReference>
<dbReference type="GenomeRNAi" id="35223"/>
<dbReference type="PRO" id="PR:Q9VIW3"/>
<dbReference type="Proteomes" id="UP000000803">
    <property type="component" value="Chromosome 2L"/>
</dbReference>
<dbReference type="Bgee" id="FBgn0003346">
    <property type="expression patterns" value="Expressed in eye disc (Drosophila) and 109 other cell types or tissues"/>
</dbReference>
<dbReference type="ExpressionAtlas" id="Q9VIW3">
    <property type="expression patterns" value="baseline and differential"/>
</dbReference>
<dbReference type="GO" id="GO:0005737">
    <property type="term" value="C:cytoplasm"/>
    <property type="evidence" value="ECO:0000314"/>
    <property type="project" value="UniProtKB"/>
</dbReference>
<dbReference type="GO" id="GO:0005829">
    <property type="term" value="C:cytosol"/>
    <property type="evidence" value="ECO:0000318"/>
    <property type="project" value="GO_Central"/>
</dbReference>
<dbReference type="GO" id="GO:0031965">
    <property type="term" value="C:nuclear membrane"/>
    <property type="evidence" value="ECO:0007669"/>
    <property type="project" value="UniProtKB-SubCell"/>
</dbReference>
<dbReference type="GO" id="GO:0005634">
    <property type="term" value="C:nucleus"/>
    <property type="evidence" value="ECO:0000318"/>
    <property type="project" value="GO_Central"/>
</dbReference>
<dbReference type="GO" id="GO:0048471">
    <property type="term" value="C:perinuclear region of cytoplasm"/>
    <property type="evidence" value="ECO:0000314"/>
    <property type="project" value="FlyBase"/>
</dbReference>
<dbReference type="GO" id="GO:0005096">
    <property type="term" value="F:GTPase activator activity"/>
    <property type="evidence" value="ECO:0000314"/>
    <property type="project" value="FlyBase"/>
</dbReference>
<dbReference type="GO" id="GO:0003723">
    <property type="term" value="F:RNA binding"/>
    <property type="evidence" value="ECO:0000314"/>
    <property type="project" value="FlyBase"/>
</dbReference>
<dbReference type="GO" id="GO:0031267">
    <property type="term" value="F:small GTPase binding"/>
    <property type="evidence" value="ECO:0000318"/>
    <property type="project" value="GO_Central"/>
</dbReference>
<dbReference type="GO" id="GO:0045132">
    <property type="term" value="P:meiotic chromosome segregation"/>
    <property type="evidence" value="ECO:0000304"/>
    <property type="project" value="FlyBase"/>
</dbReference>
<dbReference type="GO" id="GO:0051168">
    <property type="term" value="P:nuclear export"/>
    <property type="evidence" value="ECO:0000318"/>
    <property type="project" value="GO_Central"/>
</dbReference>
<dbReference type="GO" id="GO:0006913">
    <property type="term" value="P:nucleocytoplasmic transport"/>
    <property type="evidence" value="ECO:0000315"/>
    <property type="project" value="FlyBase"/>
</dbReference>
<dbReference type="GO" id="GO:0006611">
    <property type="term" value="P:protein export from nucleus"/>
    <property type="evidence" value="ECO:0000315"/>
    <property type="project" value="FlyBase"/>
</dbReference>
<dbReference type="GO" id="GO:0046822">
    <property type="term" value="P:regulation of nucleocytoplasmic transport"/>
    <property type="evidence" value="ECO:0000315"/>
    <property type="project" value="FlyBase"/>
</dbReference>
<dbReference type="GO" id="GO:0007165">
    <property type="term" value="P:signal transduction"/>
    <property type="evidence" value="ECO:0007669"/>
    <property type="project" value="InterPro"/>
</dbReference>
<dbReference type="CDD" id="cd00116">
    <property type="entry name" value="LRR_RI"/>
    <property type="match status" value="1"/>
</dbReference>
<dbReference type="FunFam" id="1.25.40.200:FF:000002">
    <property type="entry name" value="Ran GTPase activating protein, isoform B"/>
    <property type="match status" value="1"/>
</dbReference>
<dbReference type="Gene3D" id="1.25.40.200">
    <property type="entry name" value="Ran-GTPase activating protein 1, C-terminal domain"/>
    <property type="match status" value="1"/>
</dbReference>
<dbReference type="Gene3D" id="3.80.10.10">
    <property type="entry name" value="Ribonuclease Inhibitor"/>
    <property type="match status" value="1"/>
</dbReference>
<dbReference type="InterPro" id="IPR001611">
    <property type="entry name" value="Leu-rich_rpt"/>
</dbReference>
<dbReference type="InterPro" id="IPR032675">
    <property type="entry name" value="LRR_dom_sf"/>
</dbReference>
<dbReference type="InterPro" id="IPR027038">
    <property type="entry name" value="RanGap"/>
</dbReference>
<dbReference type="InterPro" id="IPR036720">
    <property type="entry name" value="RanGAP1_C_sf"/>
</dbReference>
<dbReference type="PANTHER" id="PTHR24113">
    <property type="entry name" value="RAN GTPASE-ACTIVATING PROTEIN 1"/>
    <property type="match status" value="1"/>
</dbReference>
<dbReference type="PANTHER" id="PTHR24113:SF12">
    <property type="entry name" value="RAN GTPASE-ACTIVATING PROTEIN 1"/>
    <property type="match status" value="1"/>
</dbReference>
<dbReference type="Pfam" id="PF13516">
    <property type="entry name" value="LRR_6"/>
    <property type="match status" value="4"/>
</dbReference>
<dbReference type="SMART" id="SM00368">
    <property type="entry name" value="LRR_RI"/>
    <property type="match status" value="8"/>
</dbReference>
<dbReference type="SUPFAM" id="SSF69099">
    <property type="entry name" value="Ran-GTPase activating protein 1 (RanGAP1), C-terminal domain"/>
    <property type="match status" value="1"/>
</dbReference>
<dbReference type="SUPFAM" id="SSF52047">
    <property type="entry name" value="RNI-like"/>
    <property type="match status" value="1"/>
</dbReference>
<gene>
    <name type="primary">RanGAP</name>
    <name type="synonym">Sd</name>
    <name type="ORF">CG9999</name>
</gene>
<evidence type="ECO:0000250" key="1">
    <source>
        <dbReference type="UniProtKB" id="Q684P5"/>
    </source>
</evidence>
<evidence type="ECO:0000256" key="2">
    <source>
        <dbReference type="SAM" id="MobiDB-lite"/>
    </source>
</evidence>
<evidence type="ECO:0000269" key="3">
    <source>
    </source>
</evidence>
<evidence type="ECO:0000269" key="4">
    <source>
    </source>
</evidence>
<evidence type="ECO:0000269" key="5">
    <source>
    </source>
</evidence>
<evidence type="ECO:0000269" key="6">
    <source>
    </source>
</evidence>
<evidence type="ECO:0000269" key="7">
    <source>
    </source>
</evidence>
<evidence type="ECO:0000305" key="8"/>
<protein>
    <recommendedName>
        <fullName>Ran GTPase-activating protein</fullName>
        <shortName>RanGAP</shortName>
    </recommendedName>
    <alternativeName>
        <fullName>Protein segregation distorter</fullName>
    </alternativeName>
</protein>
<organism>
    <name type="scientific">Drosophila melanogaster</name>
    <name type="common">Fruit fly</name>
    <dbReference type="NCBI Taxonomy" id="7227"/>
    <lineage>
        <taxon>Eukaryota</taxon>
        <taxon>Metazoa</taxon>
        <taxon>Ecdysozoa</taxon>
        <taxon>Arthropoda</taxon>
        <taxon>Hexapoda</taxon>
        <taxon>Insecta</taxon>
        <taxon>Pterygota</taxon>
        <taxon>Neoptera</taxon>
        <taxon>Endopterygota</taxon>
        <taxon>Diptera</taxon>
        <taxon>Brachycera</taxon>
        <taxon>Muscomorpha</taxon>
        <taxon>Ephydroidea</taxon>
        <taxon>Drosophilidae</taxon>
        <taxon>Drosophila</taxon>
        <taxon>Sophophora</taxon>
    </lineage>
</organism>
<keyword id="KW-0963">Cytoplasm</keyword>
<keyword id="KW-0343">GTPase activation</keyword>
<keyword id="KW-0433">Leucine-rich repeat</keyword>
<keyword id="KW-0472">Membrane</keyword>
<keyword id="KW-0539">Nucleus</keyword>
<keyword id="KW-0597">Phosphoprotein</keyword>
<keyword id="KW-1185">Reference proteome</keyword>
<keyword id="KW-0677">Repeat</keyword>
<comment type="function">
    <text evidence="1 3 7">GTPase activator for the nuclear Ras-related regulatory protein Ran, converting it to the putatively inactive GDP-bound state (By similarity). Trans-acting factor necessary for meiotic distortion (PubMed:10073941). Distortion is only seen in individuals that carry the RanGAP tandem duplication and express a RanGAP truncated protein. Binding of truncated RanGAP product to the Responder(RSP) locus initiates events that lead to sperm dysfunction (PubMed:10073941). During oogenesis, plays a role in the biogenesis of annulate lamellae containing nuclear pore complex components (PubMed:31626769).</text>
</comment>
<comment type="subunit">
    <text evidence="4 5">Forms a complex with Nup358/RanBP2, sbr/Nxf1 and Nxt1 (PubMed:14729961). Associates with the nuclear pore complex via its interaction with Nup358/RanBP2 (PubMed:14729961, PubMed:17032737).</text>
</comment>
<comment type="subcellular location">
    <subcellularLocation>
        <location evidence="5">Cytoplasm</location>
    </subcellularLocation>
    <subcellularLocation>
        <location evidence="5 7">Nucleus membrane</location>
        <topology evidence="5">Peripheral membrane protein</topology>
        <orientation evidence="5">Cytoplasmic side</orientation>
    </subcellularLocation>
    <text evidence="5 7">Association to cytoplasmic side of the nuclear pore complex is promoted by Nup214 (PubMed:17032737). Co-localizes with Nup358/RanBP2 to annulate lamellae (PubMed:31626769).</text>
</comment>
<comment type="tissue specificity">
    <text evidence="3 7">Both full-length and truncated protein are expressed in testis (at protein level) (PubMed:10073941). Expressed in oocytes and nurse cells (at protein level) (PubMed:31626769).</text>
</comment>
<comment type="similarity">
    <text evidence="8">Belongs to the RNA1 family.</text>
</comment>
<name>RAGP1_DROME</name>
<proteinExistence type="evidence at protein level"/>
<feature type="chain" id="PRO_0000056740" description="Ran GTPase-activating protein">
    <location>
        <begin position="1"/>
        <end position="596"/>
    </location>
</feature>
<feature type="repeat" description="LRR 1">
    <location>
        <begin position="44"/>
        <end position="71"/>
    </location>
</feature>
<feature type="repeat" description="LRR 2">
    <location>
        <begin position="107"/>
        <end position="134"/>
    </location>
</feature>
<feature type="repeat" description="LRR 3">
    <location>
        <begin position="137"/>
        <end position="164"/>
    </location>
</feature>
<feature type="repeat" description="LRR 4">
    <location>
        <begin position="203"/>
        <end position="230"/>
    </location>
</feature>
<feature type="repeat" description="LRR 5">
    <location>
        <begin position="231"/>
        <end position="258"/>
    </location>
</feature>
<feature type="repeat" description="LRR 6">
    <location>
        <begin position="259"/>
        <end position="286"/>
    </location>
</feature>
<feature type="region of interest" description="Disordered" evidence="2">
    <location>
        <begin position="355"/>
        <end position="418"/>
    </location>
</feature>
<feature type="compositionally biased region" description="Acidic residues" evidence="2">
    <location>
        <begin position="387"/>
        <end position="410"/>
    </location>
</feature>
<feature type="modified residue" description="Phosphothreonine" evidence="6">
    <location>
        <position position="433"/>
    </location>
</feature>
<feature type="modified residue" description="Phosphothreonine" evidence="6">
    <location>
        <position position="434"/>
    </location>
</feature>
<feature type="modified residue" description="Phosphoserine" evidence="6">
    <location>
        <position position="436"/>
    </location>
</feature>
<feature type="sequence conflict" description="In Ref. 1; AAD31518." evidence="8" ref="1">
    <original>D</original>
    <variation>E</variation>
    <location>
        <position position="117"/>
    </location>
</feature>